<keyword id="KW-0067">ATP-binding</keyword>
<keyword id="KW-0143">Chaperone</keyword>
<keyword id="KW-0479">Metal-binding</keyword>
<keyword id="KW-0547">Nucleotide-binding</keyword>
<keyword id="KW-0862">Zinc</keyword>
<organism>
    <name type="scientific">Bacteroides fragilis (strain ATCC 25285 / DSM 2151 / CCUG 4856 / JCM 11019 / LMG 10263 / NCTC 9343 / Onslow / VPI 2553 / EN-2)</name>
    <dbReference type="NCBI Taxonomy" id="272559"/>
    <lineage>
        <taxon>Bacteria</taxon>
        <taxon>Pseudomonadati</taxon>
        <taxon>Bacteroidota</taxon>
        <taxon>Bacteroidia</taxon>
        <taxon>Bacteroidales</taxon>
        <taxon>Bacteroidaceae</taxon>
        <taxon>Bacteroides</taxon>
    </lineage>
</organism>
<protein>
    <recommendedName>
        <fullName evidence="1">ATP-dependent Clp protease ATP-binding subunit ClpX</fullName>
    </recommendedName>
</protein>
<gene>
    <name evidence="1" type="primary">clpX</name>
    <name type="ordered locus">BF3893</name>
</gene>
<dbReference type="EMBL" id="CR626927">
    <property type="protein sequence ID" value="CAH09570.1"/>
    <property type="molecule type" value="Genomic_DNA"/>
</dbReference>
<dbReference type="RefSeq" id="WP_005791864.1">
    <property type="nucleotide sequence ID" value="NZ_UFTH01000001.1"/>
</dbReference>
<dbReference type="SMR" id="Q5L8L7"/>
<dbReference type="PaxDb" id="272559-BF9343_3789"/>
<dbReference type="GeneID" id="60367605"/>
<dbReference type="KEGG" id="bfs:BF9343_3789"/>
<dbReference type="eggNOG" id="COG1219">
    <property type="taxonomic scope" value="Bacteria"/>
</dbReference>
<dbReference type="HOGENOM" id="CLU_014218_8_2_10"/>
<dbReference type="Proteomes" id="UP000006731">
    <property type="component" value="Chromosome"/>
</dbReference>
<dbReference type="GO" id="GO:0009376">
    <property type="term" value="C:HslUV protease complex"/>
    <property type="evidence" value="ECO:0007669"/>
    <property type="project" value="TreeGrafter"/>
</dbReference>
<dbReference type="GO" id="GO:0005524">
    <property type="term" value="F:ATP binding"/>
    <property type="evidence" value="ECO:0007669"/>
    <property type="project" value="UniProtKB-UniRule"/>
</dbReference>
<dbReference type="GO" id="GO:0016887">
    <property type="term" value="F:ATP hydrolysis activity"/>
    <property type="evidence" value="ECO:0007669"/>
    <property type="project" value="InterPro"/>
</dbReference>
<dbReference type="GO" id="GO:0140662">
    <property type="term" value="F:ATP-dependent protein folding chaperone"/>
    <property type="evidence" value="ECO:0007669"/>
    <property type="project" value="InterPro"/>
</dbReference>
<dbReference type="GO" id="GO:0046983">
    <property type="term" value="F:protein dimerization activity"/>
    <property type="evidence" value="ECO:0007669"/>
    <property type="project" value="InterPro"/>
</dbReference>
<dbReference type="GO" id="GO:0051082">
    <property type="term" value="F:unfolded protein binding"/>
    <property type="evidence" value="ECO:0007669"/>
    <property type="project" value="UniProtKB-UniRule"/>
</dbReference>
<dbReference type="GO" id="GO:0008270">
    <property type="term" value="F:zinc ion binding"/>
    <property type="evidence" value="ECO:0007669"/>
    <property type="project" value="InterPro"/>
</dbReference>
<dbReference type="GO" id="GO:0051301">
    <property type="term" value="P:cell division"/>
    <property type="evidence" value="ECO:0007669"/>
    <property type="project" value="TreeGrafter"/>
</dbReference>
<dbReference type="GO" id="GO:0051603">
    <property type="term" value="P:proteolysis involved in protein catabolic process"/>
    <property type="evidence" value="ECO:0007669"/>
    <property type="project" value="TreeGrafter"/>
</dbReference>
<dbReference type="CDD" id="cd19497">
    <property type="entry name" value="RecA-like_ClpX"/>
    <property type="match status" value="1"/>
</dbReference>
<dbReference type="FunFam" id="1.10.8.60:FF:000002">
    <property type="entry name" value="ATP-dependent Clp protease ATP-binding subunit ClpX"/>
    <property type="match status" value="1"/>
</dbReference>
<dbReference type="FunFam" id="3.40.50.300:FF:000005">
    <property type="entry name" value="ATP-dependent Clp protease ATP-binding subunit ClpX"/>
    <property type="match status" value="1"/>
</dbReference>
<dbReference type="Gene3D" id="1.10.8.60">
    <property type="match status" value="1"/>
</dbReference>
<dbReference type="Gene3D" id="6.20.220.10">
    <property type="entry name" value="ClpX chaperone, C4-type zinc finger domain"/>
    <property type="match status" value="1"/>
</dbReference>
<dbReference type="Gene3D" id="3.40.50.300">
    <property type="entry name" value="P-loop containing nucleotide triphosphate hydrolases"/>
    <property type="match status" value="1"/>
</dbReference>
<dbReference type="HAMAP" id="MF_00175">
    <property type="entry name" value="ClpX"/>
    <property type="match status" value="1"/>
</dbReference>
<dbReference type="InterPro" id="IPR003593">
    <property type="entry name" value="AAA+_ATPase"/>
</dbReference>
<dbReference type="InterPro" id="IPR050052">
    <property type="entry name" value="ATP-dep_Clp_protease_ClpX"/>
</dbReference>
<dbReference type="InterPro" id="IPR003959">
    <property type="entry name" value="ATPase_AAA_core"/>
</dbReference>
<dbReference type="InterPro" id="IPR019489">
    <property type="entry name" value="Clp_ATPase_C"/>
</dbReference>
<dbReference type="InterPro" id="IPR004487">
    <property type="entry name" value="Clp_protease_ATP-bd_su_ClpX"/>
</dbReference>
<dbReference type="InterPro" id="IPR046425">
    <property type="entry name" value="ClpX_bact"/>
</dbReference>
<dbReference type="InterPro" id="IPR027417">
    <property type="entry name" value="P-loop_NTPase"/>
</dbReference>
<dbReference type="InterPro" id="IPR010603">
    <property type="entry name" value="Znf_CppX_C4"/>
</dbReference>
<dbReference type="InterPro" id="IPR038366">
    <property type="entry name" value="Znf_CppX_C4_sf"/>
</dbReference>
<dbReference type="NCBIfam" id="TIGR00382">
    <property type="entry name" value="clpX"/>
    <property type="match status" value="1"/>
</dbReference>
<dbReference type="NCBIfam" id="NF003745">
    <property type="entry name" value="PRK05342.1"/>
    <property type="match status" value="1"/>
</dbReference>
<dbReference type="PANTHER" id="PTHR48102:SF7">
    <property type="entry name" value="ATP-DEPENDENT CLP PROTEASE ATP-BINDING SUBUNIT CLPX-LIKE, MITOCHONDRIAL"/>
    <property type="match status" value="1"/>
</dbReference>
<dbReference type="PANTHER" id="PTHR48102">
    <property type="entry name" value="ATP-DEPENDENT CLP PROTEASE ATP-BINDING SUBUNIT CLPX-LIKE, MITOCHONDRIAL-RELATED"/>
    <property type="match status" value="1"/>
</dbReference>
<dbReference type="Pfam" id="PF07724">
    <property type="entry name" value="AAA_2"/>
    <property type="match status" value="1"/>
</dbReference>
<dbReference type="Pfam" id="PF10431">
    <property type="entry name" value="ClpB_D2-small"/>
    <property type="match status" value="1"/>
</dbReference>
<dbReference type="Pfam" id="PF06689">
    <property type="entry name" value="zf-C4_ClpX"/>
    <property type="match status" value="1"/>
</dbReference>
<dbReference type="SMART" id="SM00382">
    <property type="entry name" value="AAA"/>
    <property type="match status" value="1"/>
</dbReference>
<dbReference type="SMART" id="SM01086">
    <property type="entry name" value="ClpB_D2-small"/>
    <property type="match status" value="1"/>
</dbReference>
<dbReference type="SMART" id="SM00994">
    <property type="entry name" value="zf-C4_ClpX"/>
    <property type="match status" value="1"/>
</dbReference>
<dbReference type="SUPFAM" id="SSF57716">
    <property type="entry name" value="Glucocorticoid receptor-like (DNA-binding domain)"/>
    <property type="match status" value="1"/>
</dbReference>
<dbReference type="SUPFAM" id="SSF52540">
    <property type="entry name" value="P-loop containing nucleoside triphosphate hydrolases"/>
    <property type="match status" value="1"/>
</dbReference>
<dbReference type="PROSITE" id="PS51902">
    <property type="entry name" value="CLPX_ZB"/>
    <property type="match status" value="1"/>
</dbReference>
<accession>Q5L8L7</accession>
<reference key="1">
    <citation type="journal article" date="2005" name="Science">
        <title>Extensive DNA inversions in the B. fragilis genome control variable gene expression.</title>
        <authorList>
            <person name="Cerdeno-Tarraga A.-M."/>
            <person name="Patrick S."/>
            <person name="Crossman L.C."/>
            <person name="Blakely G."/>
            <person name="Abratt V."/>
            <person name="Lennard N."/>
            <person name="Poxton I."/>
            <person name="Duerden B."/>
            <person name="Harris B."/>
            <person name="Quail M.A."/>
            <person name="Barron A."/>
            <person name="Clark L."/>
            <person name="Corton C."/>
            <person name="Doggett J."/>
            <person name="Holden M.T.G."/>
            <person name="Larke N."/>
            <person name="Line A."/>
            <person name="Lord A."/>
            <person name="Norbertczak H."/>
            <person name="Ormond D."/>
            <person name="Price C."/>
            <person name="Rabbinowitsch E."/>
            <person name="Woodward J."/>
            <person name="Barrell B.G."/>
            <person name="Parkhill J."/>
        </authorList>
    </citation>
    <scope>NUCLEOTIDE SEQUENCE [LARGE SCALE GENOMIC DNA]</scope>
    <source>
        <strain>ATCC 25285 / DSM 2151 / CCUG 4856 / JCM 11019 / LMG 10263 / NCTC 9343 / Onslow / VPI 2553 / EN-2</strain>
    </source>
</reference>
<name>CLPX_BACFN</name>
<proteinExistence type="inferred from homology"/>
<feature type="chain" id="PRO_1000024516" description="ATP-dependent Clp protease ATP-binding subunit ClpX">
    <location>
        <begin position="1"/>
        <end position="415"/>
    </location>
</feature>
<feature type="domain" description="ClpX-type ZB" evidence="2">
    <location>
        <begin position="1"/>
        <end position="52"/>
    </location>
</feature>
<feature type="binding site" evidence="2">
    <location>
        <position position="11"/>
    </location>
    <ligand>
        <name>Zn(2+)</name>
        <dbReference type="ChEBI" id="CHEBI:29105"/>
    </ligand>
</feature>
<feature type="binding site" evidence="2">
    <location>
        <position position="14"/>
    </location>
    <ligand>
        <name>Zn(2+)</name>
        <dbReference type="ChEBI" id="CHEBI:29105"/>
    </ligand>
</feature>
<feature type="binding site" evidence="2">
    <location>
        <position position="33"/>
    </location>
    <ligand>
        <name>Zn(2+)</name>
        <dbReference type="ChEBI" id="CHEBI:29105"/>
    </ligand>
</feature>
<feature type="binding site" evidence="2">
    <location>
        <position position="36"/>
    </location>
    <ligand>
        <name>Zn(2+)</name>
        <dbReference type="ChEBI" id="CHEBI:29105"/>
    </ligand>
</feature>
<feature type="binding site" evidence="1">
    <location>
        <begin position="121"/>
        <end position="128"/>
    </location>
    <ligand>
        <name>ATP</name>
        <dbReference type="ChEBI" id="CHEBI:30616"/>
    </ligand>
</feature>
<sequence>MAESKNNKKRCSFCGRSENEVGFLITGMNGYICDSCATQAYEITQEAMGAGKQSAGATRLNLKELPKPVEIKNFLDQYVIGQDDAKRFLAVSVYNHYKRLLQKDSGDDVEIEKSNIIMVGSTGTGKTLLARTIAKLLHVPFTIVDATVLTEAGYVGEDIESILTRLLQVADYNVPEAEQGIVFIDEIDKIARKGDNPSITRDVSGEGVQQGLLKLLEGSVVNVPPQGGRKHPDQKMIPVNTKNILFICGGAFDGIEKKIAQRLNTHVVGYNASRKTATIDKNNMMQYIAPQDLKSFGLIPEIIGRLPVLTYLNPLDRNALRAILTEPKNSIIKQYIKLFEMDGVKLTFQPEVYEYIVDKAVEYKLGARGLRSIVETIMMDVMFEIPSEDQKEYEVTLDYAKHQLEKANLARLQTA</sequence>
<evidence type="ECO:0000255" key="1">
    <source>
        <dbReference type="HAMAP-Rule" id="MF_00175"/>
    </source>
</evidence>
<evidence type="ECO:0000255" key="2">
    <source>
        <dbReference type="PROSITE-ProRule" id="PRU01250"/>
    </source>
</evidence>
<comment type="function">
    <text evidence="1">ATP-dependent specificity component of the Clp protease. It directs the protease to specific substrates. Can perform chaperone functions in the absence of ClpP.</text>
</comment>
<comment type="subunit">
    <text evidence="1">Component of the ClpX-ClpP complex. Forms a hexameric ring that, in the presence of ATP, binds to fourteen ClpP subunits assembled into a disk-like structure with a central cavity, resembling the structure of eukaryotic proteasomes.</text>
</comment>
<comment type="similarity">
    <text evidence="1">Belongs to the ClpX chaperone family.</text>
</comment>